<keyword id="KW-0028">Amino-acid biosynthesis</keyword>
<keyword id="KW-0368">Histidine biosynthesis</keyword>
<keyword id="KW-0378">Hydrolase</keyword>
<keyword id="KW-0486">Methionine biosynthesis</keyword>
<keyword id="KW-0511">Multifunctional enzyme</keyword>
<keyword id="KW-0521">NADP</keyword>
<keyword id="KW-0554">One-carbon metabolism</keyword>
<keyword id="KW-0560">Oxidoreductase</keyword>
<keyword id="KW-0658">Purine biosynthesis</keyword>
<dbReference type="EC" id="1.5.1.5" evidence="1"/>
<dbReference type="EC" id="3.5.4.9" evidence="1"/>
<dbReference type="EMBL" id="CP001598">
    <property type="protein sequence ID" value="ACQ49524.1"/>
    <property type="molecule type" value="Genomic_DNA"/>
</dbReference>
<dbReference type="RefSeq" id="WP_000226722.1">
    <property type="nucleotide sequence ID" value="NC_012659.1"/>
</dbReference>
<dbReference type="SMR" id="C3P7W0"/>
<dbReference type="GeneID" id="45024064"/>
<dbReference type="KEGG" id="bai:BAA_4422"/>
<dbReference type="HOGENOM" id="CLU_034045_2_1_9"/>
<dbReference type="UniPathway" id="UPA00193"/>
<dbReference type="GO" id="GO:0005829">
    <property type="term" value="C:cytosol"/>
    <property type="evidence" value="ECO:0007669"/>
    <property type="project" value="TreeGrafter"/>
</dbReference>
<dbReference type="GO" id="GO:0004477">
    <property type="term" value="F:methenyltetrahydrofolate cyclohydrolase activity"/>
    <property type="evidence" value="ECO:0007669"/>
    <property type="project" value="UniProtKB-UniRule"/>
</dbReference>
<dbReference type="GO" id="GO:0004488">
    <property type="term" value="F:methylenetetrahydrofolate dehydrogenase (NADP+) activity"/>
    <property type="evidence" value="ECO:0007669"/>
    <property type="project" value="UniProtKB-UniRule"/>
</dbReference>
<dbReference type="GO" id="GO:0000105">
    <property type="term" value="P:L-histidine biosynthetic process"/>
    <property type="evidence" value="ECO:0007669"/>
    <property type="project" value="UniProtKB-KW"/>
</dbReference>
<dbReference type="GO" id="GO:0009086">
    <property type="term" value="P:methionine biosynthetic process"/>
    <property type="evidence" value="ECO:0007669"/>
    <property type="project" value="UniProtKB-KW"/>
</dbReference>
<dbReference type="GO" id="GO:0006164">
    <property type="term" value="P:purine nucleotide biosynthetic process"/>
    <property type="evidence" value="ECO:0007669"/>
    <property type="project" value="UniProtKB-KW"/>
</dbReference>
<dbReference type="GO" id="GO:0035999">
    <property type="term" value="P:tetrahydrofolate interconversion"/>
    <property type="evidence" value="ECO:0007669"/>
    <property type="project" value="UniProtKB-UniRule"/>
</dbReference>
<dbReference type="CDD" id="cd01080">
    <property type="entry name" value="NAD_bind_m-THF_DH_Cyclohyd"/>
    <property type="match status" value="1"/>
</dbReference>
<dbReference type="FunFam" id="3.40.50.10860:FF:000001">
    <property type="entry name" value="Bifunctional protein FolD"/>
    <property type="match status" value="1"/>
</dbReference>
<dbReference type="FunFam" id="3.40.50.720:FF:000006">
    <property type="entry name" value="Bifunctional protein FolD"/>
    <property type="match status" value="1"/>
</dbReference>
<dbReference type="Gene3D" id="3.40.50.10860">
    <property type="entry name" value="Leucine Dehydrogenase, chain A, domain 1"/>
    <property type="match status" value="1"/>
</dbReference>
<dbReference type="Gene3D" id="3.40.50.720">
    <property type="entry name" value="NAD(P)-binding Rossmann-like Domain"/>
    <property type="match status" value="1"/>
</dbReference>
<dbReference type="HAMAP" id="MF_01576">
    <property type="entry name" value="THF_DHG_CYH"/>
    <property type="match status" value="1"/>
</dbReference>
<dbReference type="InterPro" id="IPR046346">
    <property type="entry name" value="Aminoacid_DH-like_N_sf"/>
</dbReference>
<dbReference type="InterPro" id="IPR036291">
    <property type="entry name" value="NAD(P)-bd_dom_sf"/>
</dbReference>
<dbReference type="InterPro" id="IPR000672">
    <property type="entry name" value="THF_DH/CycHdrlase"/>
</dbReference>
<dbReference type="InterPro" id="IPR020630">
    <property type="entry name" value="THF_DH/CycHdrlase_cat_dom"/>
</dbReference>
<dbReference type="InterPro" id="IPR020867">
    <property type="entry name" value="THF_DH/CycHdrlase_CS"/>
</dbReference>
<dbReference type="InterPro" id="IPR020631">
    <property type="entry name" value="THF_DH/CycHdrlase_NAD-bd_dom"/>
</dbReference>
<dbReference type="NCBIfam" id="NF008058">
    <property type="entry name" value="PRK10792.1"/>
    <property type="match status" value="1"/>
</dbReference>
<dbReference type="NCBIfam" id="NF010783">
    <property type="entry name" value="PRK14186.1"/>
    <property type="match status" value="1"/>
</dbReference>
<dbReference type="PANTHER" id="PTHR48099:SF5">
    <property type="entry name" value="C-1-TETRAHYDROFOLATE SYNTHASE, CYTOPLASMIC"/>
    <property type="match status" value="1"/>
</dbReference>
<dbReference type="PANTHER" id="PTHR48099">
    <property type="entry name" value="C-1-TETRAHYDROFOLATE SYNTHASE, CYTOPLASMIC-RELATED"/>
    <property type="match status" value="1"/>
</dbReference>
<dbReference type="Pfam" id="PF00763">
    <property type="entry name" value="THF_DHG_CYH"/>
    <property type="match status" value="1"/>
</dbReference>
<dbReference type="Pfam" id="PF02882">
    <property type="entry name" value="THF_DHG_CYH_C"/>
    <property type="match status" value="1"/>
</dbReference>
<dbReference type="PRINTS" id="PR00085">
    <property type="entry name" value="THFDHDRGNASE"/>
</dbReference>
<dbReference type="SUPFAM" id="SSF53223">
    <property type="entry name" value="Aminoacid dehydrogenase-like, N-terminal domain"/>
    <property type="match status" value="1"/>
</dbReference>
<dbReference type="SUPFAM" id="SSF51735">
    <property type="entry name" value="NAD(P)-binding Rossmann-fold domains"/>
    <property type="match status" value="1"/>
</dbReference>
<dbReference type="PROSITE" id="PS00767">
    <property type="entry name" value="THF_DHG_CYH_2"/>
    <property type="match status" value="1"/>
</dbReference>
<comment type="function">
    <text evidence="1">Catalyzes the oxidation of 5,10-methylenetetrahydrofolate to 5,10-methenyltetrahydrofolate and then the hydrolysis of 5,10-methenyltetrahydrofolate to 10-formyltetrahydrofolate.</text>
</comment>
<comment type="catalytic activity">
    <reaction evidence="1">
        <text>(6R)-5,10-methylene-5,6,7,8-tetrahydrofolate + NADP(+) = (6R)-5,10-methenyltetrahydrofolate + NADPH</text>
        <dbReference type="Rhea" id="RHEA:22812"/>
        <dbReference type="ChEBI" id="CHEBI:15636"/>
        <dbReference type="ChEBI" id="CHEBI:57455"/>
        <dbReference type="ChEBI" id="CHEBI:57783"/>
        <dbReference type="ChEBI" id="CHEBI:58349"/>
        <dbReference type="EC" id="1.5.1.5"/>
    </reaction>
</comment>
<comment type="catalytic activity">
    <reaction evidence="1">
        <text>(6R)-5,10-methenyltetrahydrofolate + H2O = (6R)-10-formyltetrahydrofolate + H(+)</text>
        <dbReference type="Rhea" id="RHEA:23700"/>
        <dbReference type="ChEBI" id="CHEBI:15377"/>
        <dbReference type="ChEBI" id="CHEBI:15378"/>
        <dbReference type="ChEBI" id="CHEBI:57455"/>
        <dbReference type="ChEBI" id="CHEBI:195366"/>
        <dbReference type="EC" id="3.5.4.9"/>
    </reaction>
</comment>
<comment type="pathway">
    <text evidence="1">One-carbon metabolism; tetrahydrofolate interconversion.</text>
</comment>
<comment type="subunit">
    <text evidence="1">Homodimer.</text>
</comment>
<comment type="similarity">
    <text evidence="1">Belongs to the tetrahydrofolate dehydrogenase/cyclohydrolase family.</text>
</comment>
<protein>
    <recommendedName>
        <fullName evidence="1">Bifunctional protein FolD</fullName>
    </recommendedName>
    <domain>
        <recommendedName>
            <fullName evidence="1">Methylenetetrahydrofolate dehydrogenase</fullName>
            <ecNumber evidence="1">1.5.1.5</ecNumber>
        </recommendedName>
    </domain>
    <domain>
        <recommendedName>
            <fullName evidence="1">Methenyltetrahydrofolate cyclohydrolase</fullName>
            <ecNumber evidence="1">3.5.4.9</ecNumber>
        </recommendedName>
    </domain>
</protein>
<proteinExistence type="inferred from homology"/>
<gene>
    <name evidence="1" type="primary">folD</name>
    <name type="ordered locus">BAA_4422</name>
</gene>
<sequence>MVAVIIKGNEVAEKKRAQLKEEVVKLKEQGIVPGLAVILVGEDPASRSYVKGKEKGCEQVGIYSELIEFPETITEERLLAEIDRLNGDDRINGILVQLPLPKHIEEKAIIERISPEKDVDGFHPISVGRMMTGQDTFLPCTPHGIVELVKETNLDISGKHVVVIGRSNIVGKPVGQLFLNENATVTYCHSKTQNMKELTKLADILIVAVGRPKMVTADYIKEGAVVIDVGVNRLETGKLCGDVDFDNVLDVASYITPVPKGVGPMTITMLLHNTVESAKRAGVVCK</sequence>
<accession>C3P7W0</accession>
<feature type="chain" id="PRO_1000185592" description="Bifunctional protein FolD">
    <location>
        <begin position="1"/>
        <end position="286"/>
    </location>
</feature>
<feature type="binding site" evidence="1">
    <location>
        <begin position="165"/>
        <end position="167"/>
    </location>
    <ligand>
        <name>NADP(+)</name>
        <dbReference type="ChEBI" id="CHEBI:58349"/>
    </ligand>
</feature>
<feature type="binding site" evidence="1">
    <location>
        <position position="190"/>
    </location>
    <ligand>
        <name>NADP(+)</name>
        <dbReference type="ChEBI" id="CHEBI:58349"/>
    </ligand>
</feature>
<feature type="binding site" evidence="1">
    <location>
        <position position="231"/>
    </location>
    <ligand>
        <name>NADP(+)</name>
        <dbReference type="ChEBI" id="CHEBI:58349"/>
    </ligand>
</feature>
<organism>
    <name type="scientific">Bacillus anthracis (strain A0248)</name>
    <dbReference type="NCBI Taxonomy" id="592021"/>
    <lineage>
        <taxon>Bacteria</taxon>
        <taxon>Bacillati</taxon>
        <taxon>Bacillota</taxon>
        <taxon>Bacilli</taxon>
        <taxon>Bacillales</taxon>
        <taxon>Bacillaceae</taxon>
        <taxon>Bacillus</taxon>
        <taxon>Bacillus cereus group</taxon>
    </lineage>
</organism>
<name>FOLD_BACAA</name>
<evidence type="ECO:0000255" key="1">
    <source>
        <dbReference type="HAMAP-Rule" id="MF_01576"/>
    </source>
</evidence>
<reference key="1">
    <citation type="submission" date="2009-04" db="EMBL/GenBank/DDBJ databases">
        <title>Genome sequence of Bacillus anthracis A0248.</title>
        <authorList>
            <person name="Dodson R.J."/>
            <person name="Munk A.C."/>
            <person name="Bruce D."/>
            <person name="Detter C."/>
            <person name="Tapia R."/>
            <person name="Sutton G."/>
            <person name="Sims D."/>
            <person name="Brettin T."/>
        </authorList>
    </citation>
    <scope>NUCLEOTIDE SEQUENCE [LARGE SCALE GENOMIC DNA]</scope>
    <source>
        <strain>A0248</strain>
    </source>
</reference>